<proteinExistence type="inferred from homology"/>
<keyword id="KW-0210">Decarboxylase</keyword>
<keyword id="KW-0456">Lyase</keyword>
<keyword id="KW-0665">Pyrimidine biosynthesis</keyword>
<sequence length="235" mass="24889">MDARERLIVGLDVPTIGEAEKLVSTLGDDILFYKIGYQLVFAGGLEFARDLAASGKKIFLDMKLLDIDNTVASGVENIARMGMSMLTLHAYPKAMRAAVEAAAGSGLCLLGVTVLTSMDAEDLAEAGYNQDPHSLVLRRAEQARAAGMGGIVCSAAEAAEVREVLGPDMAIVTPGIRPTGSDHGDQKRVMTPFDALKAGATHLVVARPIVKAPDPRHAARAVLNEMVAARWPANR</sequence>
<evidence type="ECO:0000255" key="1">
    <source>
        <dbReference type="HAMAP-Rule" id="MF_01200"/>
    </source>
</evidence>
<name>PYRF_RHIE6</name>
<organism>
    <name type="scientific">Rhizobium etli (strain CIAT 652)</name>
    <dbReference type="NCBI Taxonomy" id="491916"/>
    <lineage>
        <taxon>Bacteria</taxon>
        <taxon>Pseudomonadati</taxon>
        <taxon>Pseudomonadota</taxon>
        <taxon>Alphaproteobacteria</taxon>
        <taxon>Hyphomicrobiales</taxon>
        <taxon>Rhizobiaceae</taxon>
        <taxon>Rhizobium/Agrobacterium group</taxon>
        <taxon>Rhizobium</taxon>
    </lineage>
</organism>
<protein>
    <recommendedName>
        <fullName evidence="1">Orotidine 5'-phosphate decarboxylase</fullName>
        <ecNumber evidence="1">4.1.1.23</ecNumber>
    </recommendedName>
    <alternativeName>
        <fullName evidence="1">OMP decarboxylase</fullName>
        <shortName evidence="1">OMPDCase</shortName>
        <shortName evidence="1">OMPdecase</shortName>
    </alternativeName>
</protein>
<comment type="function">
    <text evidence="1">Catalyzes the decarboxylation of orotidine 5'-monophosphate (OMP) to uridine 5'-monophosphate (UMP).</text>
</comment>
<comment type="catalytic activity">
    <reaction evidence="1">
        <text>orotidine 5'-phosphate + H(+) = UMP + CO2</text>
        <dbReference type="Rhea" id="RHEA:11596"/>
        <dbReference type="ChEBI" id="CHEBI:15378"/>
        <dbReference type="ChEBI" id="CHEBI:16526"/>
        <dbReference type="ChEBI" id="CHEBI:57538"/>
        <dbReference type="ChEBI" id="CHEBI:57865"/>
        <dbReference type="EC" id="4.1.1.23"/>
    </reaction>
</comment>
<comment type="pathway">
    <text evidence="1">Pyrimidine metabolism; UMP biosynthesis via de novo pathway; UMP from orotate: step 2/2.</text>
</comment>
<comment type="subunit">
    <text evidence="1">Homodimer.</text>
</comment>
<comment type="similarity">
    <text evidence="1">Belongs to the OMP decarboxylase family. Type 1 subfamily.</text>
</comment>
<gene>
    <name evidence="1" type="primary">pyrF</name>
    <name type="ordered locus">RHECIAT_CH0000352</name>
</gene>
<feature type="chain" id="PRO_1000138550" description="Orotidine 5'-phosphate decarboxylase">
    <location>
        <begin position="1"/>
        <end position="235"/>
    </location>
</feature>
<feature type="active site" description="Proton donor" evidence="1">
    <location>
        <position position="63"/>
    </location>
</feature>
<feature type="binding site" evidence="1">
    <location>
        <position position="12"/>
    </location>
    <ligand>
        <name>substrate</name>
    </ligand>
</feature>
<feature type="binding site" evidence="1">
    <location>
        <position position="34"/>
    </location>
    <ligand>
        <name>substrate</name>
    </ligand>
</feature>
<feature type="binding site" evidence="1">
    <location>
        <begin position="61"/>
        <end position="70"/>
    </location>
    <ligand>
        <name>substrate</name>
    </ligand>
</feature>
<feature type="binding site" evidence="1">
    <location>
        <position position="116"/>
    </location>
    <ligand>
        <name>substrate</name>
    </ligand>
</feature>
<feature type="binding site" evidence="1">
    <location>
        <position position="177"/>
    </location>
    <ligand>
        <name>substrate</name>
    </ligand>
</feature>
<feature type="binding site" evidence="1">
    <location>
        <position position="186"/>
    </location>
    <ligand>
        <name>substrate</name>
    </ligand>
</feature>
<feature type="binding site" evidence="1">
    <location>
        <position position="207"/>
    </location>
    <ligand>
        <name>substrate</name>
    </ligand>
</feature>
<reference key="1">
    <citation type="journal article" date="2010" name="Appl. Environ. Microbiol.">
        <title>Conserved symbiotic plasmid DNA sequences in the multireplicon pangenomic structure of Rhizobium etli.</title>
        <authorList>
            <person name="Gonzalez V."/>
            <person name="Acosta J.L."/>
            <person name="Santamaria R.I."/>
            <person name="Bustos P."/>
            <person name="Fernandez J.L."/>
            <person name="Hernandez Gonzalez I.L."/>
            <person name="Diaz R."/>
            <person name="Flores M."/>
            <person name="Palacios R."/>
            <person name="Mora J."/>
            <person name="Davila G."/>
        </authorList>
    </citation>
    <scope>NUCLEOTIDE SEQUENCE [LARGE SCALE GENOMIC DNA]</scope>
    <source>
        <strain>CIAT 652</strain>
    </source>
</reference>
<dbReference type="EC" id="4.1.1.23" evidence="1"/>
<dbReference type="EMBL" id="CP001074">
    <property type="protein sequence ID" value="ACE89346.1"/>
    <property type="molecule type" value="Genomic_DNA"/>
</dbReference>
<dbReference type="SMR" id="B3PYJ5"/>
<dbReference type="KEGG" id="rec:RHECIAT_CH0000352"/>
<dbReference type="eggNOG" id="COG0284">
    <property type="taxonomic scope" value="Bacteria"/>
</dbReference>
<dbReference type="HOGENOM" id="CLU_067069_1_0_5"/>
<dbReference type="UniPathway" id="UPA00070">
    <property type="reaction ID" value="UER00120"/>
</dbReference>
<dbReference type="Proteomes" id="UP000008817">
    <property type="component" value="Chromosome"/>
</dbReference>
<dbReference type="GO" id="GO:0005829">
    <property type="term" value="C:cytosol"/>
    <property type="evidence" value="ECO:0007669"/>
    <property type="project" value="TreeGrafter"/>
</dbReference>
<dbReference type="GO" id="GO:0004590">
    <property type="term" value="F:orotidine-5'-phosphate decarboxylase activity"/>
    <property type="evidence" value="ECO:0007669"/>
    <property type="project" value="UniProtKB-UniRule"/>
</dbReference>
<dbReference type="GO" id="GO:0006207">
    <property type="term" value="P:'de novo' pyrimidine nucleobase biosynthetic process"/>
    <property type="evidence" value="ECO:0007669"/>
    <property type="project" value="InterPro"/>
</dbReference>
<dbReference type="GO" id="GO:0044205">
    <property type="term" value="P:'de novo' UMP biosynthetic process"/>
    <property type="evidence" value="ECO:0007669"/>
    <property type="project" value="UniProtKB-UniRule"/>
</dbReference>
<dbReference type="CDD" id="cd04725">
    <property type="entry name" value="OMP_decarboxylase_like"/>
    <property type="match status" value="1"/>
</dbReference>
<dbReference type="Gene3D" id="3.20.20.70">
    <property type="entry name" value="Aldolase class I"/>
    <property type="match status" value="1"/>
</dbReference>
<dbReference type="HAMAP" id="MF_01200_B">
    <property type="entry name" value="OMPdecase_type1_B"/>
    <property type="match status" value="1"/>
</dbReference>
<dbReference type="InterPro" id="IPR013785">
    <property type="entry name" value="Aldolase_TIM"/>
</dbReference>
<dbReference type="InterPro" id="IPR014732">
    <property type="entry name" value="OMPdecase"/>
</dbReference>
<dbReference type="InterPro" id="IPR018089">
    <property type="entry name" value="OMPdecase_AS"/>
</dbReference>
<dbReference type="InterPro" id="IPR047596">
    <property type="entry name" value="OMPdecase_bac"/>
</dbReference>
<dbReference type="InterPro" id="IPR001754">
    <property type="entry name" value="OMPdeCOase_dom"/>
</dbReference>
<dbReference type="InterPro" id="IPR011060">
    <property type="entry name" value="RibuloseP-bd_barrel"/>
</dbReference>
<dbReference type="NCBIfam" id="NF001273">
    <property type="entry name" value="PRK00230.1"/>
    <property type="match status" value="1"/>
</dbReference>
<dbReference type="NCBIfam" id="TIGR01740">
    <property type="entry name" value="pyrF"/>
    <property type="match status" value="1"/>
</dbReference>
<dbReference type="PANTHER" id="PTHR32119">
    <property type="entry name" value="OROTIDINE 5'-PHOSPHATE DECARBOXYLASE"/>
    <property type="match status" value="1"/>
</dbReference>
<dbReference type="PANTHER" id="PTHR32119:SF2">
    <property type="entry name" value="OROTIDINE 5'-PHOSPHATE DECARBOXYLASE"/>
    <property type="match status" value="1"/>
</dbReference>
<dbReference type="Pfam" id="PF00215">
    <property type="entry name" value="OMPdecase"/>
    <property type="match status" value="1"/>
</dbReference>
<dbReference type="SMART" id="SM00934">
    <property type="entry name" value="OMPdecase"/>
    <property type="match status" value="1"/>
</dbReference>
<dbReference type="SUPFAM" id="SSF51366">
    <property type="entry name" value="Ribulose-phoshate binding barrel"/>
    <property type="match status" value="1"/>
</dbReference>
<dbReference type="PROSITE" id="PS00156">
    <property type="entry name" value="OMPDECASE"/>
    <property type="match status" value="1"/>
</dbReference>
<accession>B3PYJ5</accession>